<comment type="function">
    <text evidence="2">Isomerizes L-alanine to D-alanine which is then oxidized to pyruvate by DadA.</text>
</comment>
<comment type="catalytic activity">
    <reaction evidence="2">
        <text>L-alanine = D-alanine</text>
        <dbReference type="Rhea" id="RHEA:20249"/>
        <dbReference type="ChEBI" id="CHEBI:57416"/>
        <dbReference type="ChEBI" id="CHEBI:57972"/>
        <dbReference type="EC" id="5.1.1.1"/>
    </reaction>
</comment>
<comment type="cofactor">
    <cofactor evidence="3">
        <name>pyridoxal 5'-phosphate</name>
        <dbReference type="ChEBI" id="CHEBI:597326"/>
    </cofactor>
</comment>
<comment type="biophysicochemical properties">
    <kinetics>
        <KM evidence="2">1.4 mM for D-alanine</KM>
        <KM evidence="2">1.4 mM for L-alanine</KM>
        <Vmax evidence="2">134.0 umol/min/mg enzyme toward D-alanine</Vmax>
        <Vmax evidence="2">155.0 umol/min/mg enzyme toward L-alanine</Vmax>
    </kinetics>
</comment>
<comment type="subunit">
    <text evidence="3">Homodimer.</text>
</comment>
<comment type="similarity">
    <text evidence="1">Belongs to the alanine racemase family.</text>
</comment>
<keyword id="KW-0002">3D-structure</keyword>
<keyword id="KW-0413">Isomerase</keyword>
<keyword id="KW-0663">Pyridoxal phosphate</keyword>
<keyword id="KW-1185">Reference proteome</keyword>
<name>ALR2_PSEAE</name>
<reference key="1">
    <citation type="journal article" date="2000" name="Curr. Microbiol.">
        <title>Characterization of the alanine racemases from Pseudomonas aeruginosa PAO1.</title>
        <authorList>
            <person name="Strych U."/>
            <person name="Huang H.-C."/>
            <person name="Krause K.L."/>
            <person name="Benedik M.J."/>
        </authorList>
    </citation>
    <scope>NUCLEOTIDE SEQUENCE [GENOMIC DNA]</scope>
    <scope>FUNCTION</scope>
    <scope>CATALYTIC ACTIVITY</scope>
    <scope>BIOPHYSICOCHEMICAL PROPERTIES</scope>
    <source>
        <strain>ATCC 15692 / DSM 22644 / CIP 104116 / JCM 14847 / LMG 12228 / 1C / PRS 101 / PAO1</strain>
    </source>
</reference>
<reference key="2">
    <citation type="journal article" date="2000" name="Nature">
        <title>Complete genome sequence of Pseudomonas aeruginosa PAO1, an opportunistic pathogen.</title>
        <authorList>
            <person name="Stover C.K."/>
            <person name="Pham X.-Q.T."/>
            <person name="Erwin A.L."/>
            <person name="Mizoguchi S.D."/>
            <person name="Warrener P."/>
            <person name="Hickey M.J."/>
            <person name="Brinkman F.S.L."/>
            <person name="Hufnagle W.O."/>
            <person name="Kowalik D.J."/>
            <person name="Lagrou M."/>
            <person name="Garber R.L."/>
            <person name="Goltry L."/>
            <person name="Tolentino E."/>
            <person name="Westbrock-Wadman S."/>
            <person name="Yuan Y."/>
            <person name="Brody L.L."/>
            <person name="Coulter S.N."/>
            <person name="Folger K.R."/>
            <person name="Kas A."/>
            <person name="Larbig K."/>
            <person name="Lim R.M."/>
            <person name="Smith K.A."/>
            <person name="Spencer D.H."/>
            <person name="Wong G.K.-S."/>
            <person name="Wu Z."/>
            <person name="Paulsen I.T."/>
            <person name="Reizer J."/>
            <person name="Saier M.H. Jr."/>
            <person name="Hancock R.E.W."/>
            <person name="Lory S."/>
            <person name="Olson M.V."/>
        </authorList>
    </citation>
    <scope>NUCLEOTIDE SEQUENCE [LARGE SCALE GENOMIC DNA]</scope>
    <source>
        <strain>ATCC 15692 / DSM 22644 / CIP 104116 / JCM 14847 / LMG 12228 / 1C / PRS 101 / PAO1</strain>
    </source>
</reference>
<reference key="3">
    <citation type="journal article" date="2003" name="Biochemistry">
        <title>Crystal structure at 1.45 A resolution of alanine racemase from a pathogenic bacterium, Pseudomonas aeruginosa, contains both internal and external aldimine forms.</title>
        <authorList>
            <person name="LeMagueres P."/>
            <person name="Im H."/>
            <person name="Dvorak A."/>
            <person name="Strych U."/>
            <person name="Benedik M.J."/>
            <person name="Krause K.L."/>
        </authorList>
    </citation>
    <scope>X-RAY CRYSTALLOGRAPHY (1.45 ANGSTROMS) IN COMPLEX WITH PYRIDOXAL PHOSPHATE AND LYSINE</scope>
    <scope>COFACTOR</scope>
    <scope>SUBUNIT</scope>
    <scope>PYRIDOXAL PHOSPHATE AT LYS-33</scope>
    <scope>CARBOXYLATION AT LYS-122</scope>
</reference>
<proteinExistence type="evidence at protein level"/>
<evidence type="ECO:0000255" key="1">
    <source>
        <dbReference type="HAMAP-Rule" id="MF_01201"/>
    </source>
</evidence>
<evidence type="ECO:0000269" key="2">
    <source>
    </source>
</evidence>
<evidence type="ECO:0000269" key="3">
    <source>
    </source>
</evidence>
<evidence type="ECO:0000303" key="4">
    <source>
    </source>
</evidence>
<evidence type="ECO:0000305" key="5"/>
<evidence type="ECO:0000305" key="6">
    <source>
    </source>
</evidence>
<evidence type="ECO:0000305" key="7">
    <source>
    </source>
</evidence>
<evidence type="ECO:0000312" key="8">
    <source>
        <dbReference type="EMBL" id="AAG08687.1"/>
    </source>
</evidence>
<evidence type="ECO:0007829" key="9">
    <source>
        <dbReference type="PDB" id="1RCQ"/>
    </source>
</evidence>
<dbReference type="EC" id="5.1.1.1" evidence="2"/>
<dbReference type="EMBL" id="AF165881">
    <property type="protein sequence ID" value="AAD47081.1"/>
    <property type="molecule type" value="Genomic_DNA"/>
</dbReference>
<dbReference type="EMBL" id="AE004091">
    <property type="protein sequence ID" value="AAG08687.1"/>
    <property type="molecule type" value="Genomic_DNA"/>
</dbReference>
<dbReference type="PIR" id="F82982">
    <property type="entry name" value="F82982"/>
</dbReference>
<dbReference type="RefSeq" id="NP_253989.1">
    <property type="nucleotide sequence ID" value="NC_002516.2"/>
</dbReference>
<dbReference type="RefSeq" id="WP_003114351.1">
    <property type="nucleotide sequence ID" value="NC_002516.2"/>
</dbReference>
<dbReference type="PDB" id="1RCQ">
    <property type="method" value="X-ray"/>
    <property type="resolution" value="1.45 A"/>
    <property type="chains" value="A=1-357"/>
</dbReference>
<dbReference type="PDBsum" id="1RCQ"/>
<dbReference type="SMR" id="Q9HTQ2"/>
<dbReference type="FunCoup" id="Q9HTQ2">
    <property type="interactions" value="324"/>
</dbReference>
<dbReference type="STRING" id="208964.PA5302"/>
<dbReference type="DrugBank" id="DB03252">
    <property type="generic name" value="D-Lysine"/>
</dbReference>
<dbReference type="DrugBank" id="DB03801">
    <property type="generic name" value="Lysine Nz-Carboxylic Acid"/>
</dbReference>
<dbReference type="PaxDb" id="208964-PA5302"/>
<dbReference type="GeneID" id="878055"/>
<dbReference type="KEGG" id="pae:PA5302"/>
<dbReference type="PATRIC" id="fig|208964.12.peg.5556"/>
<dbReference type="PseudoCAP" id="PA5302"/>
<dbReference type="HOGENOM" id="CLU_028393_1_0_6"/>
<dbReference type="InParanoid" id="Q9HTQ2"/>
<dbReference type="OrthoDB" id="9813814at2"/>
<dbReference type="PhylomeDB" id="Q9HTQ2"/>
<dbReference type="BioCyc" id="PAER208964:G1FZ6-5423-MONOMER"/>
<dbReference type="BRENDA" id="5.1.1.1">
    <property type="organism ID" value="5087"/>
</dbReference>
<dbReference type="SABIO-RK" id="Q9HTQ2"/>
<dbReference type="EvolutionaryTrace" id="Q9HTQ2"/>
<dbReference type="Proteomes" id="UP000002438">
    <property type="component" value="Chromosome"/>
</dbReference>
<dbReference type="GO" id="GO:0005829">
    <property type="term" value="C:cytosol"/>
    <property type="evidence" value="ECO:0000318"/>
    <property type="project" value="GO_Central"/>
</dbReference>
<dbReference type="GO" id="GO:0008784">
    <property type="term" value="F:alanine racemase activity"/>
    <property type="evidence" value="ECO:0000314"/>
    <property type="project" value="PseudoCAP"/>
</dbReference>
<dbReference type="GO" id="GO:0030170">
    <property type="term" value="F:pyridoxal phosphate binding"/>
    <property type="evidence" value="ECO:0000318"/>
    <property type="project" value="GO_Central"/>
</dbReference>
<dbReference type="GO" id="GO:0030632">
    <property type="term" value="P:D-alanine biosynthetic process"/>
    <property type="evidence" value="ECO:0000318"/>
    <property type="project" value="GO_Central"/>
</dbReference>
<dbReference type="CDD" id="cd06827">
    <property type="entry name" value="PLPDE_III_AR_proteobact"/>
    <property type="match status" value="1"/>
</dbReference>
<dbReference type="FunFam" id="2.40.37.10:FF:000002">
    <property type="entry name" value="Alanine racemase"/>
    <property type="match status" value="1"/>
</dbReference>
<dbReference type="FunFam" id="3.20.20.10:FF:000002">
    <property type="entry name" value="Alanine racemase"/>
    <property type="match status" value="1"/>
</dbReference>
<dbReference type="Gene3D" id="3.20.20.10">
    <property type="entry name" value="Alanine racemase"/>
    <property type="match status" value="1"/>
</dbReference>
<dbReference type="Gene3D" id="2.40.37.10">
    <property type="entry name" value="Lyase, Ornithine Decarboxylase, Chain A, domain 1"/>
    <property type="match status" value="1"/>
</dbReference>
<dbReference type="HAMAP" id="MF_01201">
    <property type="entry name" value="Ala_racemase"/>
    <property type="match status" value="1"/>
</dbReference>
<dbReference type="InterPro" id="IPR000821">
    <property type="entry name" value="Ala_racemase"/>
</dbReference>
<dbReference type="InterPro" id="IPR009006">
    <property type="entry name" value="Ala_racemase/Decarboxylase_C"/>
</dbReference>
<dbReference type="InterPro" id="IPR011079">
    <property type="entry name" value="Ala_racemase_C"/>
</dbReference>
<dbReference type="InterPro" id="IPR001608">
    <property type="entry name" value="Ala_racemase_N"/>
</dbReference>
<dbReference type="InterPro" id="IPR020622">
    <property type="entry name" value="Ala_racemase_pyridoxalP-BS"/>
</dbReference>
<dbReference type="InterPro" id="IPR029066">
    <property type="entry name" value="PLP-binding_barrel"/>
</dbReference>
<dbReference type="NCBIfam" id="TIGR00492">
    <property type="entry name" value="alr"/>
    <property type="match status" value="1"/>
</dbReference>
<dbReference type="PANTHER" id="PTHR30511">
    <property type="entry name" value="ALANINE RACEMASE"/>
    <property type="match status" value="1"/>
</dbReference>
<dbReference type="PANTHER" id="PTHR30511:SF0">
    <property type="entry name" value="ALANINE RACEMASE, CATABOLIC-RELATED"/>
    <property type="match status" value="1"/>
</dbReference>
<dbReference type="Pfam" id="PF00842">
    <property type="entry name" value="Ala_racemase_C"/>
    <property type="match status" value="1"/>
</dbReference>
<dbReference type="Pfam" id="PF01168">
    <property type="entry name" value="Ala_racemase_N"/>
    <property type="match status" value="1"/>
</dbReference>
<dbReference type="PRINTS" id="PR00992">
    <property type="entry name" value="ALARACEMASE"/>
</dbReference>
<dbReference type="SMART" id="SM01005">
    <property type="entry name" value="Ala_racemase_C"/>
    <property type="match status" value="1"/>
</dbReference>
<dbReference type="SUPFAM" id="SSF50621">
    <property type="entry name" value="Alanine racemase C-terminal domain-like"/>
    <property type="match status" value="1"/>
</dbReference>
<dbReference type="SUPFAM" id="SSF51419">
    <property type="entry name" value="PLP-binding barrel"/>
    <property type="match status" value="1"/>
</dbReference>
<dbReference type="PROSITE" id="PS00395">
    <property type="entry name" value="ALANINE_RACEMASE"/>
    <property type="match status" value="1"/>
</dbReference>
<protein>
    <recommendedName>
        <fullName evidence="6">Alanine racemase, catabolic</fullName>
        <ecNumber evidence="2">5.1.1.1</ecNumber>
    </recommendedName>
</protein>
<feature type="chain" id="PRO_0000114547" description="Alanine racemase, catabolic">
    <location>
        <begin position="1"/>
        <end position="357"/>
    </location>
</feature>
<feature type="active site" description="Proton acceptor; specific for D-alanine" evidence="1">
    <location>
        <position position="33"/>
    </location>
</feature>
<feature type="active site" description="Proton acceptor; specific for L-alanine" evidence="1">
    <location>
        <position position="253"/>
    </location>
</feature>
<feature type="binding site" evidence="7">
    <location>
        <position position="129"/>
    </location>
    <ligand>
        <name>substrate</name>
    </ligand>
</feature>
<feature type="binding site" evidence="1">
    <location>
        <position position="301"/>
    </location>
    <ligand>
        <name>substrate</name>
    </ligand>
</feature>
<feature type="modified residue" description="N6-(pyridoxal phosphate)lysine" evidence="3">
    <location>
        <position position="33"/>
    </location>
</feature>
<feature type="modified residue" description="N6-carboxylysine" evidence="3">
    <location>
        <position position="122"/>
    </location>
</feature>
<feature type="sequence conflict" description="In Ref. 1; AAD47081." evidence="5" ref="1">
    <original>S</original>
    <variation>R</variation>
    <location>
        <position position="138"/>
    </location>
</feature>
<feature type="sequence conflict" description="In Ref. 1; AAD47081." evidence="5" ref="1">
    <original>A</original>
    <variation>S</variation>
    <location>
        <position position="178"/>
    </location>
</feature>
<feature type="sequence conflict" description="In Ref. 1; AAD47081." evidence="5" ref="1">
    <original>S</original>
    <variation>R</variation>
    <location>
        <position position="262"/>
    </location>
</feature>
<feature type="strand" evidence="9">
    <location>
        <begin position="5"/>
        <end position="9"/>
    </location>
</feature>
<feature type="helix" evidence="9">
    <location>
        <begin position="10"/>
        <end position="24"/>
    </location>
</feature>
<feature type="strand" evidence="9">
    <location>
        <begin position="26"/>
        <end position="31"/>
    </location>
</feature>
<feature type="helix" evidence="9">
    <location>
        <begin position="33"/>
        <end position="37"/>
    </location>
</feature>
<feature type="helix" evidence="9">
    <location>
        <begin position="41"/>
        <end position="48"/>
    </location>
</feature>
<feature type="turn" evidence="9">
    <location>
        <begin position="49"/>
        <end position="51"/>
    </location>
</feature>
<feature type="strand" evidence="9">
    <location>
        <begin position="53"/>
        <end position="59"/>
    </location>
</feature>
<feature type="helix" evidence="9">
    <location>
        <begin position="60"/>
        <end position="68"/>
    </location>
</feature>
<feature type="strand" evidence="9">
    <location>
        <begin position="75"/>
        <end position="77"/>
    </location>
</feature>
<feature type="helix" evidence="9">
    <location>
        <begin position="84"/>
        <end position="86"/>
    </location>
</feature>
<feature type="helix" evidence="9">
    <location>
        <begin position="87"/>
        <end position="92"/>
    </location>
</feature>
<feature type="strand" evidence="9">
    <location>
        <begin position="95"/>
        <end position="99"/>
    </location>
</feature>
<feature type="helix" evidence="9">
    <location>
        <begin position="102"/>
        <end position="110"/>
    </location>
</feature>
<feature type="strand" evidence="9">
    <location>
        <begin position="117"/>
        <end position="123"/>
    </location>
</feature>
<feature type="strand" evidence="9">
    <location>
        <begin position="125"/>
        <end position="127"/>
    </location>
</feature>
<feature type="strand" evidence="9">
    <location>
        <begin position="129"/>
        <end position="132"/>
    </location>
</feature>
<feature type="helix" evidence="9">
    <location>
        <begin position="134"/>
        <end position="146"/>
    </location>
</feature>
<feature type="strand" evidence="9">
    <location>
        <begin position="150"/>
        <end position="156"/>
    </location>
</feature>
<feature type="helix" evidence="9">
    <location>
        <begin position="169"/>
        <end position="181"/>
    </location>
</feature>
<feature type="helix" evidence="9">
    <location>
        <begin position="193"/>
        <end position="198"/>
    </location>
</feature>
<feature type="strand" evidence="9">
    <location>
        <begin position="205"/>
        <end position="207"/>
    </location>
</feature>
<feature type="helix" evidence="9">
    <location>
        <begin position="211"/>
        <end position="214"/>
    </location>
</feature>
<feature type="strand" evidence="9">
    <location>
        <begin position="218"/>
        <end position="221"/>
    </location>
</feature>
<feature type="helix" evidence="9">
    <location>
        <begin position="226"/>
        <end position="228"/>
    </location>
</feature>
<feature type="strand" evidence="9">
    <location>
        <begin position="233"/>
        <end position="245"/>
    </location>
</feature>
<feature type="strand" evidence="9">
    <location>
        <begin position="250"/>
        <end position="252"/>
    </location>
</feature>
<feature type="helix" evidence="9">
    <location>
        <begin position="253"/>
        <end position="255"/>
    </location>
</feature>
<feature type="strand" evidence="9">
    <location>
        <begin position="260"/>
        <end position="269"/>
    </location>
</feature>
<feature type="helix" evidence="9">
    <location>
        <begin position="272"/>
        <end position="274"/>
    </location>
</feature>
<feature type="strand" evidence="9">
    <location>
        <begin position="285"/>
        <end position="288"/>
    </location>
</feature>
<feature type="strand" evidence="9">
    <location>
        <begin position="291"/>
        <end position="295"/>
    </location>
</feature>
<feature type="strand" evidence="9">
    <location>
        <begin position="304"/>
        <end position="307"/>
    </location>
</feature>
<feature type="strand" evidence="9">
    <location>
        <begin position="319"/>
        <end position="327"/>
    </location>
</feature>
<feature type="helix" evidence="9">
    <location>
        <begin position="329"/>
        <end position="335"/>
    </location>
</feature>
<feature type="helix" evidence="9">
    <location>
        <begin position="340"/>
        <end position="345"/>
    </location>
</feature>
<feature type="strand" evidence="9">
    <location>
        <begin position="352"/>
        <end position="355"/>
    </location>
</feature>
<sequence length="357" mass="38915">MRPARALIDLQALRHNYRLAREATGARALAVIKADAYGHGAVRCAEALAAEADGFAVACIEEGLELREAGIRQPILLLEGFFEASELELIVAHDFWCVVHCAWQLEAIERASLARPLNVWLKMDSGMHRVGFFPEDFSAAHERLRASGKVAKIVMMSHFSRADELDCPRTEEQLAAFAAASQGLEGEISLRNSPAVLGWPKVPSDWVRPGILLYGATPFERAHPLADRLRPVMTLESKVISVRDLPAGEPVGYGARYSTERSQRIGVVAMGYADGYPRHAADGTLVFIDGKPGRLVGRVSMDMLTVDLTDHPQAGLGSRVELWGPNVPVGALAAQFGSIPYQLLCNLKRVPRVYSGA</sequence>
<organism>
    <name type="scientific">Pseudomonas aeruginosa (strain ATCC 15692 / DSM 22644 / CIP 104116 / JCM 14847 / LMG 12228 / 1C / PRS 101 / PAO1)</name>
    <dbReference type="NCBI Taxonomy" id="208964"/>
    <lineage>
        <taxon>Bacteria</taxon>
        <taxon>Pseudomonadati</taxon>
        <taxon>Pseudomonadota</taxon>
        <taxon>Gammaproteobacteria</taxon>
        <taxon>Pseudomonadales</taxon>
        <taxon>Pseudomonadaceae</taxon>
        <taxon>Pseudomonas</taxon>
    </lineage>
</organism>
<accession>Q9HTQ2</accession>
<accession>Q9S419</accession>
<gene>
    <name evidence="4 8" type="primary">dadX</name>
    <name type="ordered locus">PA5302</name>
</gene>